<proteinExistence type="evidence at transcript level"/>
<name>FRI2_TOBAC</name>
<sequence length="259" mass="29220">MLLKLAPAFTLLNSHGENLSPMLSTSSQGFVLKNFSTKSRNGLLVVCASKGSNTKPLTGVVFEPFEEVKKELMLVPTVPQVSLARHKYSDQCEAAVNEQINVEYNVSYVYHGMYAYFDRDNVALKGLARFFKESSEEERGHAEKLMEYQNKRGGKVKLQSILMPLSEFDHAEEGDALYAMELALSLAKLTNQKLLNLHAVATRNNDVQLADFVESKYLREQVEAIKMISEYVAQLRRVGKGHGVWHFDQMLLQEEEVVA</sequence>
<organism>
    <name type="scientific">Nicotiana tabacum</name>
    <name type="common">Common tobacco</name>
    <dbReference type="NCBI Taxonomy" id="4097"/>
    <lineage>
        <taxon>Eukaryota</taxon>
        <taxon>Viridiplantae</taxon>
        <taxon>Streptophyta</taxon>
        <taxon>Embryophyta</taxon>
        <taxon>Tracheophyta</taxon>
        <taxon>Spermatophyta</taxon>
        <taxon>Magnoliopsida</taxon>
        <taxon>eudicotyledons</taxon>
        <taxon>Gunneridae</taxon>
        <taxon>Pentapetalae</taxon>
        <taxon>asterids</taxon>
        <taxon>lamiids</taxon>
        <taxon>Solanales</taxon>
        <taxon>Solanaceae</taxon>
        <taxon>Nicotianoideae</taxon>
        <taxon>Nicotianeae</taxon>
        <taxon>Nicotiana</taxon>
    </lineage>
</organism>
<gene>
    <name type="primary">FER2</name>
</gene>
<keyword id="KW-0150">Chloroplast</keyword>
<keyword id="KW-0408">Iron</keyword>
<keyword id="KW-0409">Iron storage</keyword>
<keyword id="KW-0479">Metal-binding</keyword>
<keyword id="KW-0560">Oxidoreductase</keyword>
<keyword id="KW-0934">Plastid</keyword>
<keyword id="KW-1185">Reference proteome</keyword>
<keyword id="KW-0809">Transit peptide</keyword>
<accession>Q8H1T3</accession>
<comment type="function">
    <text evidence="1">Stores iron in a soluble, non-toxic, readily available form. Important for iron homeostasis. Has ferroxidase activity. Iron is taken up in the ferrous form and deposited as ferric hydroxides after oxidation (By similarity).</text>
</comment>
<comment type="catalytic activity">
    <reaction>
        <text>4 Fe(2+) + O2 + 4 H(+) = 4 Fe(3+) + 2 H2O</text>
        <dbReference type="Rhea" id="RHEA:11148"/>
        <dbReference type="ChEBI" id="CHEBI:15377"/>
        <dbReference type="ChEBI" id="CHEBI:15378"/>
        <dbReference type="ChEBI" id="CHEBI:15379"/>
        <dbReference type="ChEBI" id="CHEBI:29033"/>
        <dbReference type="ChEBI" id="CHEBI:29034"/>
        <dbReference type="EC" id="1.16.3.1"/>
    </reaction>
</comment>
<comment type="subunit">
    <text evidence="1">Oligomer of 24 subunits. There are two types of subunits: L (light) chain and H (heavy) chain. The major chain can be light or heavy, depending on the species and tissue type. The functional molecule forms a roughly spherical shell with a diameter of 12 nm and contains a central cavity into which the insoluble mineral iron core is deposited (By similarity).</text>
</comment>
<comment type="subcellular location">
    <subcellularLocation>
        <location evidence="1">Plastid</location>
        <location evidence="1">Chloroplast</location>
    </subcellularLocation>
</comment>
<comment type="similarity">
    <text evidence="4">Belongs to the ferritin family.</text>
</comment>
<protein>
    <recommendedName>
        <fullName>Ferritin-2, chloroplastic</fullName>
        <ecNumber>1.16.3.1</ecNumber>
    </recommendedName>
    <alternativeName>
        <fullName>NtFer2</fullName>
    </alternativeName>
</protein>
<dbReference type="EC" id="1.16.3.1"/>
<dbReference type="EMBL" id="AY141105">
    <property type="protein sequence ID" value="AAN06322.1"/>
    <property type="molecule type" value="mRNA"/>
</dbReference>
<dbReference type="RefSeq" id="NP_001313209.1">
    <property type="nucleotide sequence ID" value="NM_001326280.1"/>
</dbReference>
<dbReference type="SMR" id="Q8H1T3"/>
<dbReference type="STRING" id="4097.Q8H1T3"/>
<dbReference type="PaxDb" id="4097-Q8H1T3"/>
<dbReference type="GeneID" id="107832545"/>
<dbReference type="KEGG" id="nta:107832545"/>
<dbReference type="OrthoDB" id="186462at2759"/>
<dbReference type="Proteomes" id="UP000084051">
    <property type="component" value="Unplaced"/>
</dbReference>
<dbReference type="GO" id="GO:0009507">
    <property type="term" value="C:chloroplast"/>
    <property type="evidence" value="ECO:0007669"/>
    <property type="project" value="UniProtKB-SubCell"/>
</dbReference>
<dbReference type="GO" id="GO:0005737">
    <property type="term" value="C:cytoplasm"/>
    <property type="evidence" value="ECO:0000318"/>
    <property type="project" value="GO_Central"/>
</dbReference>
<dbReference type="GO" id="GO:0008199">
    <property type="term" value="F:ferric iron binding"/>
    <property type="evidence" value="ECO:0000318"/>
    <property type="project" value="GO_Central"/>
</dbReference>
<dbReference type="GO" id="GO:0008198">
    <property type="term" value="F:ferrous iron binding"/>
    <property type="evidence" value="ECO:0000318"/>
    <property type="project" value="GO_Central"/>
</dbReference>
<dbReference type="GO" id="GO:0004322">
    <property type="term" value="F:ferroxidase activity"/>
    <property type="evidence" value="ECO:0007669"/>
    <property type="project" value="UniProtKB-EC"/>
</dbReference>
<dbReference type="GO" id="GO:0006879">
    <property type="term" value="P:intracellular iron ion homeostasis"/>
    <property type="evidence" value="ECO:0007669"/>
    <property type="project" value="UniProtKB-KW"/>
</dbReference>
<dbReference type="GO" id="GO:0006826">
    <property type="term" value="P:iron ion transport"/>
    <property type="evidence" value="ECO:0007669"/>
    <property type="project" value="InterPro"/>
</dbReference>
<dbReference type="CDD" id="cd01056">
    <property type="entry name" value="Euk_Ferritin"/>
    <property type="match status" value="1"/>
</dbReference>
<dbReference type="FunFam" id="1.20.1260.10:FF:000006">
    <property type="entry name" value="Ferritin"/>
    <property type="match status" value="1"/>
</dbReference>
<dbReference type="Gene3D" id="1.20.1260.10">
    <property type="match status" value="1"/>
</dbReference>
<dbReference type="InterPro" id="IPR001519">
    <property type="entry name" value="Ferritin"/>
</dbReference>
<dbReference type="InterPro" id="IPR012347">
    <property type="entry name" value="Ferritin-like"/>
</dbReference>
<dbReference type="InterPro" id="IPR009040">
    <property type="entry name" value="Ferritin-like_diiron"/>
</dbReference>
<dbReference type="InterPro" id="IPR009078">
    <property type="entry name" value="Ferritin-like_SF"/>
</dbReference>
<dbReference type="InterPro" id="IPR014034">
    <property type="entry name" value="Ferritin_CS"/>
</dbReference>
<dbReference type="InterPro" id="IPR008331">
    <property type="entry name" value="Ferritin_DPS_dom"/>
</dbReference>
<dbReference type="PANTHER" id="PTHR11431">
    <property type="entry name" value="FERRITIN"/>
    <property type="match status" value="1"/>
</dbReference>
<dbReference type="PANTHER" id="PTHR11431:SF126">
    <property type="entry name" value="FERRITIN-2, CHLOROPLASTIC-RELATED"/>
    <property type="match status" value="1"/>
</dbReference>
<dbReference type="Pfam" id="PF00210">
    <property type="entry name" value="Ferritin"/>
    <property type="match status" value="1"/>
</dbReference>
<dbReference type="SUPFAM" id="SSF47240">
    <property type="entry name" value="Ferritin-like"/>
    <property type="match status" value="1"/>
</dbReference>
<dbReference type="PROSITE" id="PS00204">
    <property type="entry name" value="FERRITIN_2"/>
    <property type="match status" value="1"/>
</dbReference>
<dbReference type="PROSITE" id="PS50905">
    <property type="entry name" value="FERRITIN_LIKE"/>
    <property type="match status" value="1"/>
</dbReference>
<feature type="transit peptide" description="Chloroplast" evidence="2">
    <location>
        <begin position="1"/>
        <end position="52"/>
    </location>
</feature>
<feature type="chain" id="PRO_0000008869" description="Ferritin-2, chloroplastic">
    <location>
        <begin position="53"/>
        <end position="259"/>
    </location>
</feature>
<feature type="domain" description="Ferritin-like diiron" evidence="3">
    <location>
        <begin position="86"/>
        <end position="239"/>
    </location>
</feature>
<feature type="region of interest" description="Extension peptide (EP)">
    <location>
        <begin position="53"/>
        <end position="85"/>
    </location>
</feature>
<feature type="binding site" evidence="3">
    <location>
        <position position="103"/>
    </location>
    <ligand>
        <name>Fe cation</name>
        <dbReference type="ChEBI" id="CHEBI:24875"/>
        <label>1</label>
    </ligand>
</feature>
<feature type="binding site" evidence="3">
    <location>
        <position position="138"/>
    </location>
    <ligand>
        <name>Fe cation</name>
        <dbReference type="ChEBI" id="CHEBI:24875"/>
        <label>1</label>
    </ligand>
</feature>
<feature type="binding site" evidence="3">
    <location>
        <position position="138"/>
    </location>
    <ligand>
        <name>Fe cation</name>
        <dbReference type="ChEBI" id="CHEBI:24875"/>
        <label>2</label>
    </ligand>
</feature>
<feature type="binding site" evidence="3">
    <location>
        <position position="141"/>
    </location>
    <ligand>
        <name>Fe cation</name>
        <dbReference type="ChEBI" id="CHEBI:24875"/>
        <label>1</label>
    </ligand>
</feature>
<feature type="binding site" evidence="3">
    <location>
        <position position="221"/>
    </location>
    <ligand>
        <name>Fe cation</name>
        <dbReference type="ChEBI" id="CHEBI:24875"/>
        <label>2</label>
    </ligand>
</feature>
<evidence type="ECO:0000250" key="1"/>
<evidence type="ECO:0000255" key="2"/>
<evidence type="ECO:0000255" key="3">
    <source>
        <dbReference type="PROSITE-ProRule" id="PRU00085"/>
    </source>
</evidence>
<evidence type="ECO:0000305" key="4"/>
<reference key="1">
    <citation type="submission" date="2002-08" db="EMBL/GenBank/DDBJ databases">
        <title>Occurrence and expression analysis of two types of the tobacco ferritin genes.</title>
        <authorList>
            <person name="Jiang T."/>
            <person name="Yoshihara T."/>
            <person name="Masuda T."/>
            <person name="Goto F."/>
        </authorList>
    </citation>
    <scope>NUCLEOTIDE SEQUENCE [MRNA]</scope>
</reference>